<comment type="subunit">
    <text evidence="4">Homodimer.</text>
</comment>
<comment type="subcellular location">
    <subcellularLocation>
        <location evidence="1">Nucleus</location>
    </subcellularLocation>
</comment>
<comment type="tissue specificity">
    <text evidence="3">Expressed constitutively in roots, leaves, stems, and flowers.</text>
</comment>
<name>BH080_ARATH</name>
<evidence type="ECO:0000255" key="1">
    <source>
        <dbReference type="PROSITE-ProRule" id="PRU00981"/>
    </source>
</evidence>
<evidence type="ECO:0000256" key="2">
    <source>
        <dbReference type="SAM" id="MobiDB-lite"/>
    </source>
</evidence>
<evidence type="ECO:0000269" key="3">
    <source>
    </source>
</evidence>
<evidence type="ECO:0000305" key="4"/>
<sequence>MQSTHISGGSSGGGGGGGGEVSRSGLSRIRSAPATWIETLLEEDEEEGLKPNLCLTELLTGNNNSGGVITSRDDSFEFLSSVEQGLYNHHQGGGFHRQNSSPADFLSGSGSGTDGYFSNFGIPANYDYLSTNVDISPTKRSRDMETQFSSQLKEEQMSGGISGMMDMNMDKIFEDSVPCRVRAKRGCATHPRSIAERVRRTRISDRIRRLQELVPNMDKQTNTADMLEEAVEYVKALQSQIQELTEQQKRCKCKPKEEQ</sequence>
<organism>
    <name type="scientific">Arabidopsis thaliana</name>
    <name type="common">Mouse-ear cress</name>
    <dbReference type="NCBI Taxonomy" id="3702"/>
    <lineage>
        <taxon>Eukaryota</taxon>
        <taxon>Viridiplantae</taxon>
        <taxon>Streptophyta</taxon>
        <taxon>Embryophyta</taxon>
        <taxon>Tracheophyta</taxon>
        <taxon>Spermatophyta</taxon>
        <taxon>Magnoliopsida</taxon>
        <taxon>eudicotyledons</taxon>
        <taxon>Gunneridae</taxon>
        <taxon>Pentapetalae</taxon>
        <taxon>rosids</taxon>
        <taxon>malvids</taxon>
        <taxon>Brassicales</taxon>
        <taxon>Brassicaceae</taxon>
        <taxon>Camelineae</taxon>
        <taxon>Arabidopsis</taxon>
    </lineage>
</organism>
<reference key="1">
    <citation type="journal article" date="2003" name="Mol. Biol. Evol.">
        <title>The basic helix-loop-helix transcription factor family in plants: a genome-wide study of protein structure and functional diversity.</title>
        <authorList>
            <person name="Heim M.A."/>
            <person name="Jakoby M."/>
            <person name="Werber M."/>
            <person name="Martin C."/>
            <person name="Weisshaar B."/>
            <person name="Bailey P.C."/>
        </authorList>
    </citation>
    <scope>NUCLEOTIDE SEQUENCE [MRNA]</scope>
    <scope>TISSUE SPECIFICITY</scope>
    <scope>GENE FAMILY</scope>
    <scope>NOMENCLATURE</scope>
    <source>
        <strain>cv. Columbia</strain>
        <tissue>Flower</tissue>
    </source>
</reference>
<reference key="2">
    <citation type="journal article" date="2000" name="Nature">
        <title>Sequence and analysis of chromosome 1 of the plant Arabidopsis thaliana.</title>
        <authorList>
            <person name="Theologis A."/>
            <person name="Ecker J.R."/>
            <person name="Palm C.J."/>
            <person name="Federspiel N.A."/>
            <person name="Kaul S."/>
            <person name="White O."/>
            <person name="Alonso J."/>
            <person name="Altafi H."/>
            <person name="Araujo R."/>
            <person name="Bowman C.L."/>
            <person name="Brooks S.Y."/>
            <person name="Buehler E."/>
            <person name="Chan A."/>
            <person name="Chao Q."/>
            <person name="Chen H."/>
            <person name="Cheuk R.F."/>
            <person name="Chin C.W."/>
            <person name="Chung M.K."/>
            <person name="Conn L."/>
            <person name="Conway A.B."/>
            <person name="Conway A.R."/>
            <person name="Creasy T.H."/>
            <person name="Dewar K."/>
            <person name="Dunn P."/>
            <person name="Etgu P."/>
            <person name="Feldblyum T.V."/>
            <person name="Feng J.-D."/>
            <person name="Fong B."/>
            <person name="Fujii C.Y."/>
            <person name="Gill J.E."/>
            <person name="Goldsmith A.D."/>
            <person name="Haas B."/>
            <person name="Hansen N.F."/>
            <person name="Hughes B."/>
            <person name="Huizar L."/>
            <person name="Hunter J.L."/>
            <person name="Jenkins J."/>
            <person name="Johnson-Hopson C."/>
            <person name="Khan S."/>
            <person name="Khaykin E."/>
            <person name="Kim C.J."/>
            <person name="Koo H.L."/>
            <person name="Kremenetskaia I."/>
            <person name="Kurtz D.B."/>
            <person name="Kwan A."/>
            <person name="Lam B."/>
            <person name="Langin-Hooper S."/>
            <person name="Lee A."/>
            <person name="Lee J.M."/>
            <person name="Lenz C.A."/>
            <person name="Li J.H."/>
            <person name="Li Y.-P."/>
            <person name="Lin X."/>
            <person name="Liu S.X."/>
            <person name="Liu Z.A."/>
            <person name="Luros J.S."/>
            <person name="Maiti R."/>
            <person name="Marziali A."/>
            <person name="Militscher J."/>
            <person name="Miranda M."/>
            <person name="Nguyen M."/>
            <person name="Nierman W.C."/>
            <person name="Osborne B.I."/>
            <person name="Pai G."/>
            <person name="Peterson J."/>
            <person name="Pham P.K."/>
            <person name="Rizzo M."/>
            <person name="Rooney T."/>
            <person name="Rowley D."/>
            <person name="Sakano H."/>
            <person name="Salzberg S.L."/>
            <person name="Schwartz J.R."/>
            <person name="Shinn P."/>
            <person name="Southwick A.M."/>
            <person name="Sun H."/>
            <person name="Tallon L.J."/>
            <person name="Tambunga G."/>
            <person name="Toriumi M.J."/>
            <person name="Town C.D."/>
            <person name="Utterback T."/>
            <person name="Van Aken S."/>
            <person name="Vaysberg M."/>
            <person name="Vysotskaia V.S."/>
            <person name="Walker M."/>
            <person name="Wu D."/>
            <person name="Yu G."/>
            <person name="Fraser C.M."/>
            <person name="Venter J.C."/>
            <person name="Davis R.W."/>
        </authorList>
    </citation>
    <scope>NUCLEOTIDE SEQUENCE [LARGE SCALE GENOMIC DNA]</scope>
    <source>
        <strain>cv. Columbia</strain>
    </source>
</reference>
<reference key="3">
    <citation type="journal article" date="2017" name="Plant J.">
        <title>Araport11: a complete reannotation of the Arabidopsis thaliana reference genome.</title>
        <authorList>
            <person name="Cheng C.Y."/>
            <person name="Krishnakumar V."/>
            <person name="Chan A.P."/>
            <person name="Thibaud-Nissen F."/>
            <person name="Schobel S."/>
            <person name="Town C.D."/>
        </authorList>
    </citation>
    <scope>GENOME REANNOTATION</scope>
    <source>
        <strain>cv. Columbia</strain>
    </source>
</reference>
<reference key="4">
    <citation type="journal article" date="2003" name="Science">
        <title>Empirical analysis of transcriptional activity in the Arabidopsis genome.</title>
        <authorList>
            <person name="Yamada K."/>
            <person name="Lim J."/>
            <person name="Dale J.M."/>
            <person name="Chen H."/>
            <person name="Shinn P."/>
            <person name="Palm C.J."/>
            <person name="Southwick A.M."/>
            <person name="Wu H.C."/>
            <person name="Kim C.J."/>
            <person name="Nguyen M."/>
            <person name="Pham P.K."/>
            <person name="Cheuk R.F."/>
            <person name="Karlin-Newmann G."/>
            <person name="Liu S.X."/>
            <person name="Lam B."/>
            <person name="Sakano H."/>
            <person name="Wu T."/>
            <person name="Yu G."/>
            <person name="Miranda M."/>
            <person name="Quach H.L."/>
            <person name="Tripp M."/>
            <person name="Chang C.H."/>
            <person name="Lee J.M."/>
            <person name="Toriumi M.J."/>
            <person name="Chan M.M."/>
            <person name="Tang C.C."/>
            <person name="Onodera C.S."/>
            <person name="Deng J.M."/>
            <person name="Akiyama K."/>
            <person name="Ansari Y."/>
            <person name="Arakawa T."/>
            <person name="Banh J."/>
            <person name="Banno F."/>
            <person name="Bowser L."/>
            <person name="Brooks S.Y."/>
            <person name="Carninci P."/>
            <person name="Chao Q."/>
            <person name="Choy N."/>
            <person name="Enju A."/>
            <person name="Goldsmith A.D."/>
            <person name="Gurjal M."/>
            <person name="Hansen N.F."/>
            <person name="Hayashizaki Y."/>
            <person name="Johnson-Hopson C."/>
            <person name="Hsuan V.W."/>
            <person name="Iida K."/>
            <person name="Karnes M."/>
            <person name="Khan S."/>
            <person name="Koesema E."/>
            <person name="Ishida J."/>
            <person name="Jiang P.X."/>
            <person name="Jones T."/>
            <person name="Kawai J."/>
            <person name="Kamiya A."/>
            <person name="Meyers C."/>
            <person name="Nakajima M."/>
            <person name="Narusaka M."/>
            <person name="Seki M."/>
            <person name="Sakurai T."/>
            <person name="Satou M."/>
            <person name="Tamse R."/>
            <person name="Vaysberg M."/>
            <person name="Wallender E.K."/>
            <person name="Wong C."/>
            <person name="Yamamura Y."/>
            <person name="Yuan S."/>
            <person name="Shinozaki K."/>
            <person name="Davis R.W."/>
            <person name="Theologis A."/>
            <person name="Ecker J.R."/>
        </authorList>
    </citation>
    <scope>NUCLEOTIDE SEQUENCE [LARGE SCALE MRNA]</scope>
    <source>
        <strain>cv. Columbia</strain>
    </source>
</reference>
<reference key="5">
    <citation type="journal article" date="2003" name="Plant Cell">
        <title>The Arabidopsis basic/helix-loop-helix transcription factor family.</title>
        <authorList>
            <person name="Toledo-Ortiz G."/>
            <person name="Huq E."/>
            <person name="Quail P.H."/>
        </authorList>
    </citation>
    <scope>GENE FAMILY</scope>
</reference>
<reference key="6">
    <citation type="journal article" date="2003" name="Plant Cell">
        <title>Update on the basic helix-loop-helix transcription factor gene family in Arabidopsis thaliana.</title>
        <authorList>
            <person name="Bailey P.C."/>
            <person name="Martin C."/>
            <person name="Toledo-Ortiz G."/>
            <person name="Quail P.H."/>
            <person name="Huq E."/>
            <person name="Heim M.A."/>
            <person name="Jakoby M."/>
            <person name="Werber M."/>
            <person name="Weisshaar B."/>
        </authorList>
    </citation>
    <scope>GENE FAMILY</scope>
    <scope>NOMENCLATURE</scope>
</reference>
<keyword id="KW-0238">DNA-binding</keyword>
<keyword id="KW-0539">Nucleus</keyword>
<keyword id="KW-1185">Reference proteome</keyword>
<keyword id="KW-0804">Transcription</keyword>
<keyword id="KW-0805">Transcription regulation</keyword>
<protein>
    <recommendedName>
        <fullName>Transcription factor bHLH80</fullName>
    </recommendedName>
    <alternativeName>
        <fullName>Basic helix-loop-helix protein 80</fullName>
        <shortName>AtbHLH80</shortName>
        <shortName>bHLH 80</shortName>
    </alternativeName>
    <alternativeName>
        <fullName>Transcription factor EN 71</fullName>
    </alternativeName>
    <alternativeName>
        <fullName>bHLH transcription factor bHLH080</fullName>
    </alternativeName>
</protein>
<gene>
    <name type="primary">BHLH80</name>
    <name type="synonym">EN71</name>
    <name type="ordered locus">At1g35460</name>
    <name type="ORF">F12A4.2</name>
</gene>
<dbReference type="EMBL" id="AF488612">
    <property type="protein sequence ID" value="AAM10958.1"/>
    <property type="molecule type" value="mRNA"/>
</dbReference>
<dbReference type="EMBL" id="AC023064">
    <property type="protein sequence ID" value="AAG52112.1"/>
    <property type="molecule type" value="Genomic_DNA"/>
</dbReference>
<dbReference type="EMBL" id="CP002684">
    <property type="protein sequence ID" value="AEE31795.1"/>
    <property type="molecule type" value="Genomic_DNA"/>
</dbReference>
<dbReference type="EMBL" id="AF411791">
    <property type="protein sequence ID" value="AAL06481.1"/>
    <property type="molecule type" value="mRNA"/>
</dbReference>
<dbReference type="EMBL" id="AY093794">
    <property type="protein sequence ID" value="AAM10410.1"/>
    <property type="molecule type" value="mRNA"/>
</dbReference>
<dbReference type="PIR" id="F86475">
    <property type="entry name" value="F86475"/>
</dbReference>
<dbReference type="RefSeq" id="NP_174776.1">
    <property type="nucleotide sequence ID" value="NM_103240.3"/>
</dbReference>
<dbReference type="SMR" id="Q9C8P8"/>
<dbReference type="BioGRID" id="25670">
    <property type="interactions" value="17"/>
</dbReference>
<dbReference type="FunCoup" id="Q9C8P8">
    <property type="interactions" value="463"/>
</dbReference>
<dbReference type="IntAct" id="Q9C8P8">
    <property type="interactions" value="4"/>
</dbReference>
<dbReference type="STRING" id="3702.Q9C8P8"/>
<dbReference type="iPTMnet" id="Q9C8P8"/>
<dbReference type="PaxDb" id="3702-AT1G35460.1"/>
<dbReference type="ProteomicsDB" id="240333"/>
<dbReference type="EnsemblPlants" id="AT1G35460.1">
    <property type="protein sequence ID" value="AT1G35460.1"/>
    <property type="gene ID" value="AT1G35460"/>
</dbReference>
<dbReference type="GeneID" id="840438"/>
<dbReference type="Gramene" id="AT1G35460.1">
    <property type="protein sequence ID" value="AT1G35460.1"/>
    <property type="gene ID" value="AT1G35460"/>
</dbReference>
<dbReference type="KEGG" id="ath:AT1G35460"/>
<dbReference type="Araport" id="AT1G35460"/>
<dbReference type="TAIR" id="AT1G35460">
    <property type="gene designation" value="FBH1"/>
</dbReference>
<dbReference type="eggNOG" id="ENOG502RY1W">
    <property type="taxonomic scope" value="Eukaryota"/>
</dbReference>
<dbReference type="HOGENOM" id="CLU_063812_0_0_1"/>
<dbReference type="InParanoid" id="Q9C8P8"/>
<dbReference type="OMA" id="QKRCKCK"/>
<dbReference type="OrthoDB" id="2019494at2759"/>
<dbReference type="PhylomeDB" id="Q9C8P8"/>
<dbReference type="PRO" id="PR:Q9C8P8"/>
<dbReference type="Proteomes" id="UP000006548">
    <property type="component" value="Chromosome 1"/>
</dbReference>
<dbReference type="ExpressionAtlas" id="Q9C8P8">
    <property type="expression patterns" value="baseline and differential"/>
</dbReference>
<dbReference type="GO" id="GO:0005634">
    <property type="term" value="C:nucleus"/>
    <property type="evidence" value="ECO:0007669"/>
    <property type="project" value="UniProtKB-SubCell"/>
</dbReference>
<dbReference type="GO" id="GO:0000987">
    <property type="term" value="F:cis-regulatory region sequence-specific DNA binding"/>
    <property type="evidence" value="ECO:0000314"/>
    <property type="project" value="UniProtKB"/>
</dbReference>
<dbReference type="GO" id="GO:0003700">
    <property type="term" value="F:DNA-binding transcription factor activity"/>
    <property type="evidence" value="ECO:0000250"/>
    <property type="project" value="TAIR"/>
</dbReference>
<dbReference type="GO" id="GO:0046983">
    <property type="term" value="F:protein dimerization activity"/>
    <property type="evidence" value="ECO:0007669"/>
    <property type="project" value="InterPro"/>
</dbReference>
<dbReference type="GO" id="GO:0007623">
    <property type="term" value="P:circadian rhythm"/>
    <property type="evidence" value="ECO:0000315"/>
    <property type="project" value="UniProtKB"/>
</dbReference>
<dbReference type="GO" id="GO:0042335">
    <property type="term" value="P:cuticle development"/>
    <property type="evidence" value="ECO:0000315"/>
    <property type="project" value="TAIR"/>
</dbReference>
<dbReference type="GO" id="GO:0006355">
    <property type="term" value="P:regulation of DNA-templated transcription"/>
    <property type="evidence" value="ECO:0000304"/>
    <property type="project" value="TAIR"/>
</dbReference>
<dbReference type="GO" id="GO:0010468">
    <property type="term" value="P:regulation of gene expression"/>
    <property type="evidence" value="ECO:0000315"/>
    <property type="project" value="UniProtKB"/>
</dbReference>
<dbReference type="GO" id="GO:2000028">
    <property type="term" value="P:regulation of photoperiodism, flowering"/>
    <property type="evidence" value="ECO:0000315"/>
    <property type="project" value="UniProtKB"/>
</dbReference>
<dbReference type="GO" id="GO:0009409">
    <property type="term" value="P:response to cold"/>
    <property type="evidence" value="ECO:0000270"/>
    <property type="project" value="UniProtKB"/>
</dbReference>
<dbReference type="GO" id="GO:0009408">
    <property type="term" value="P:response to heat"/>
    <property type="evidence" value="ECO:0000270"/>
    <property type="project" value="UniProtKB"/>
</dbReference>
<dbReference type="GO" id="GO:0010378">
    <property type="term" value="P:temperature compensation of the circadian clock"/>
    <property type="evidence" value="ECO:0000315"/>
    <property type="project" value="UniProtKB"/>
</dbReference>
<dbReference type="CDD" id="cd11393">
    <property type="entry name" value="bHLH_AtbHLH_like"/>
    <property type="match status" value="1"/>
</dbReference>
<dbReference type="FunFam" id="4.10.280.10:FF:000021">
    <property type="entry name" value="Transcription factor bHLH130 family"/>
    <property type="match status" value="1"/>
</dbReference>
<dbReference type="Gene3D" id="4.10.280.10">
    <property type="entry name" value="Helix-loop-helix DNA-binding domain"/>
    <property type="match status" value="1"/>
</dbReference>
<dbReference type="InterPro" id="IPR045239">
    <property type="entry name" value="bHLH95_bHLH"/>
</dbReference>
<dbReference type="InterPro" id="IPR011598">
    <property type="entry name" value="bHLH_dom"/>
</dbReference>
<dbReference type="InterPro" id="IPR036638">
    <property type="entry name" value="HLH_DNA-bd_sf"/>
</dbReference>
<dbReference type="InterPro" id="IPR045843">
    <property type="entry name" value="IND-like"/>
</dbReference>
<dbReference type="PANTHER" id="PTHR16223:SF225">
    <property type="entry name" value="TRANSCRIPTION FACTOR BHLH80"/>
    <property type="match status" value="1"/>
</dbReference>
<dbReference type="PANTHER" id="PTHR16223">
    <property type="entry name" value="TRANSCRIPTION FACTOR BHLH83-RELATED"/>
    <property type="match status" value="1"/>
</dbReference>
<dbReference type="Pfam" id="PF00010">
    <property type="entry name" value="HLH"/>
    <property type="match status" value="1"/>
</dbReference>
<dbReference type="SMART" id="SM00353">
    <property type="entry name" value="HLH"/>
    <property type="match status" value="1"/>
</dbReference>
<dbReference type="SUPFAM" id="SSF47459">
    <property type="entry name" value="HLH, helix-loop-helix DNA-binding domain"/>
    <property type="match status" value="1"/>
</dbReference>
<dbReference type="PROSITE" id="PS50888">
    <property type="entry name" value="BHLH"/>
    <property type="match status" value="1"/>
</dbReference>
<feature type="chain" id="PRO_0000358772" description="Transcription factor bHLH80">
    <location>
        <begin position="1"/>
        <end position="259"/>
    </location>
</feature>
<feature type="domain" description="bHLH" evidence="1">
    <location>
        <begin position="187"/>
        <end position="237"/>
    </location>
</feature>
<feature type="region of interest" description="Disordered" evidence="2">
    <location>
        <begin position="1"/>
        <end position="25"/>
    </location>
</feature>
<feature type="compositionally biased region" description="Gly residues" evidence="2">
    <location>
        <begin position="9"/>
        <end position="20"/>
    </location>
</feature>
<proteinExistence type="evidence at transcript level"/>
<accession>Q9C8P8</accession>